<sequence length="153" mass="17401">MKFCKPKPKSILSLDIGSKRIGLAYCDPLCITSNILPAVKRFENNQEIKIIRNYINEFNLTGFIVGIPLDEKGKMTTQAIDCKNYGQLLSNELKLPFSYVNEHSSTWESSERFGIKKDKSGLIDSFSAKIILEQWIEEGPELEEIAGKRQIKD</sequence>
<evidence type="ECO:0000255" key="1">
    <source>
        <dbReference type="HAMAP-Rule" id="MF_00651"/>
    </source>
</evidence>
<name>YQGF_PROM0</name>
<reference key="1">
    <citation type="journal article" date="2007" name="PLoS Genet.">
        <title>Patterns and implications of gene gain and loss in the evolution of Prochlorococcus.</title>
        <authorList>
            <person name="Kettler G.C."/>
            <person name="Martiny A.C."/>
            <person name="Huang K."/>
            <person name="Zucker J."/>
            <person name="Coleman M.L."/>
            <person name="Rodrigue S."/>
            <person name="Chen F."/>
            <person name="Lapidus A."/>
            <person name="Ferriera S."/>
            <person name="Johnson J."/>
            <person name="Steglich C."/>
            <person name="Church G.M."/>
            <person name="Richardson P."/>
            <person name="Chisholm S.W."/>
        </authorList>
    </citation>
    <scope>NUCLEOTIDE SEQUENCE [LARGE SCALE GENOMIC DNA]</scope>
    <source>
        <strain>MIT 9301</strain>
    </source>
</reference>
<keyword id="KW-0963">Cytoplasm</keyword>
<keyword id="KW-0378">Hydrolase</keyword>
<keyword id="KW-0540">Nuclease</keyword>
<keyword id="KW-1185">Reference proteome</keyword>
<keyword id="KW-0690">Ribosome biogenesis</keyword>
<organism>
    <name type="scientific">Prochlorococcus marinus (strain MIT 9301)</name>
    <dbReference type="NCBI Taxonomy" id="167546"/>
    <lineage>
        <taxon>Bacteria</taxon>
        <taxon>Bacillati</taxon>
        <taxon>Cyanobacteriota</taxon>
        <taxon>Cyanophyceae</taxon>
        <taxon>Synechococcales</taxon>
        <taxon>Prochlorococcaceae</taxon>
        <taxon>Prochlorococcus</taxon>
    </lineage>
</organism>
<protein>
    <recommendedName>
        <fullName evidence="1">Putative pre-16S rRNA nuclease</fullName>
        <ecNumber evidence="1">3.1.-.-</ecNumber>
    </recommendedName>
</protein>
<feature type="chain" id="PRO_1000061550" description="Putative pre-16S rRNA nuclease">
    <location>
        <begin position="1"/>
        <end position="153"/>
    </location>
</feature>
<proteinExistence type="inferred from homology"/>
<comment type="function">
    <text evidence="1">Could be a nuclease involved in processing of the 5'-end of pre-16S rRNA.</text>
</comment>
<comment type="subcellular location">
    <subcellularLocation>
        <location evidence="1">Cytoplasm</location>
    </subcellularLocation>
</comment>
<comment type="similarity">
    <text evidence="1">Belongs to the YqgF nuclease family.</text>
</comment>
<gene>
    <name type="ordered locus">P9301_08521</name>
</gene>
<dbReference type="EC" id="3.1.-.-" evidence="1"/>
<dbReference type="EMBL" id="CP000576">
    <property type="protein sequence ID" value="ABO17475.1"/>
    <property type="molecule type" value="Genomic_DNA"/>
</dbReference>
<dbReference type="SMR" id="A3PCK0"/>
<dbReference type="STRING" id="167546.P9301_08521"/>
<dbReference type="KEGG" id="pmg:P9301_08521"/>
<dbReference type="eggNOG" id="COG0816">
    <property type="taxonomic scope" value="Bacteria"/>
</dbReference>
<dbReference type="HOGENOM" id="CLU_098240_3_1_3"/>
<dbReference type="OrthoDB" id="9796140at2"/>
<dbReference type="Proteomes" id="UP000001430">
    <property type="component" value="Chromosome"/>
</dbReference>
<dbReference type="GO" id="GO:0005829">
    <property type="term" value="C:cytosol"/>
    <property type="evidence" value="ECO:0007669"/>
    <property type="project" value="TreeGrafter"/>
</dbReference>
<dbReference type="GO" id="GO:0004518">
    <property type="term" value="F:nuclease activity"/>
    <property type="evidence" value="ECO:0007669"/>
    <property type="project" value="UniProtKB-KW"/>
</dbReference>
<dbReference type="GO" id="GO:0000967">
    <property type="term" value="P:rRNA 5'-end processing"/>
    <property type="evidence" value="ECO:0007669"/>
    <property type="project" value="UniProtKB-UniRule"/>
</dbReference>
<dbReference type="CDD" id="cd16964">
    <property type="entry name" value="YqgF"/>
    <property type="match status" value="1"/>
</dbReference>
<dbReference type="Gene3D" id="3.30.420.140">
    <property type="entry name" value="YqgF/RNase H-like domain"/>
    <property type="match status" value="1"/>
</dbReference>
<dbReference type="HAMAP" id="MF_00651">
    <property type="entry name" value="Nuclease_YqgF"/>
    <property type="match status" value="1"/>
</dbReference>
<dbReference type="InterPro" id="IPR012337">
    <property type="entry name" value="RNaseH-like_sf"/>
</dbReference>
<dbReference type="InterPro" id="IPR005227">
    <property type="entry name" value="YqgF"/>
</dbReference>
<dbReference type="InterPro" id="IPR006641">
    <property type="entry name" value="YqgF/RNaseH-like_dom"/>
</dbReference>
<dbReference type="InterPro" id="IPR037027">
    <property type="entry name" value="YqgF/RNaseH-like_dom_sf"/>
</dbReference>
<dbReference type="NCBIfam" id="TIGR00250">
    <property type="entry name" value="RNAse_H_YqgF"/>
    <property type="match status" value="1"/>
</dbReference>
<dbReference type="PANTHER" id="PTHR33317">
    <property type="entry name" value="POLYNUCLEOTIDYL TRANSFERASE, RIBONUCLEASE H-LIKE SUPERFAMILY PROTEIN"/>
    <property type="match status" value="1"/>
</dbReference>
<dbReference type="PANTHER" id="PTHR33317:SF4">
    <property type="entry name" value="POLYNUCLEOTIDYL TRANSFERASE, RIBONUCLEASE H-LIKE SUPERFAMILY PROTEIN"/>
    <property type="match status" value="1"/>
</dbReference>
<dbReference type="Pfam" id="PF03652">
    <property type="entry name" value="RuvX"/>
    <property type="match status" value="1"/>
</dbReference>
<dbReference type="SMART" id="SM00732">
    <property type="entry name" value="YqgFc"/>
    <property type="match status" value="1"/>
</dbReference>
<dbReference type="SUPFAM" id="SSF53098">
    <property type="entry name" value="Ribonuclease H-like"/>
    <property type="match status" value="1"/>
</dbReference>
<accession>A3PCK0</accession>